<proteinExistence type="evidence at protein level"/>
<dbReference type="EMBL" id="U13015">
    <property type="protein sequence ID" value="AAA61640.1"/>
    <property type="molecule type" value="Genomic_DNA"/>
</dbReference>
<dbReference type="EMBL" id="U14527">
    <property type="protein sequence ID" value="AAA68478.1"/>
    <property type="molecule type" value="Genomic_DNA"/>
</dbReference>
<dbReference type="EMBL" id="X99074">
    <property type="protein sequence ID" value="CAA67530.1"/>
    <property type="molecule type" value="Genomic_DNA"/>
</dbReference>
<dbReference type="EMBL" id="Z72971">
    <property type="protein sequence ID" value="CAA97212.1"/>
    <property type="molecule type" value="Genomic_DNA"/>
</dbReference>
<dbReference type="EMBL" id="BK006941">
    <property type="protein sequence ID" value="DAA08280.1"/>
    <property type="molecule type" value="Genomic_DNA"/>
</dbReference>
<dbReference type="PIR" id="S64504">
    <property type="entry name" value="S64504"/>
</dbReference>
<dbReference type="RefSeq" id="NP_011702.1">
    <property type="nucleotide sequence ID" value="NM_001181315.1"/>
</dbReference>
<dbReference type="PDB" id="5FMF">
    <property type="method" value="EM"/>
    <property type="resolution" value="6.00 A"/>
    <property type="chains" value="U=94-150, U=323-417"/>
</dbReference>
<dbReference type="PDB" id="5FYW">
    <property type="method" value="EM"/>
    <property type="resolution" value="4.35 A"/>
    <property type="chains" value="Q=1-735"/>
</dbReference>
<dbReference type="PDB" id="5FZ5">
    <property type="method" value="EM"/>
    <property type="resolution" value="8.80 A"/>
    <property type="chains" value="Q=1-735"/>
</dbReference>
<dbReference type="PDB" id="5IP7">
    <property type="method" value="X-ray"/>
    <property type="resolution" value="3.52 A"/>
    <property type="chains" value="Q=21-35"/>
</dbReference>
<dbReference type="PDB" id="5IP9">
    <property type="method" value="X-ray"/>
    <property type="resolution" value="3.90 A"/>
    <property type="chains" value="Q=21-35"/>
</dbReference>
<dbReference type="PDB" id="5OQJ">
    <property type="method" value="EM"/>
    <property type="resolution" value="4.70 A"/>
    <property type="chains" value="Q=1-735"/>
</dbReference>
<dbReference type="PDB" id="5OQM">
    <property type="method" value="EM"/>
    <property type="resolution" value="5.80 A"/>
    <property type="chains" value="Q=1-735"/>
</dbReference>
<dbReference type="PDB" id="5SVA">
    <property type="method" value="EM"/>
    <property type="resolution" value="15.30 A"/>
    <property type="chains" value="f=1-735"/>
</dbReference>
<dbReference type="PDB" id="6GYK">
    <property type="method" value="EM"/>
    <property type="resolution" value="5.10 A"/>
    <property type="chains" value="Q=1-735"/>
</dbReference>
<dbReference type="PDB" id="6GYL">
    <property type="method" value="EM"/>
    <property type="resolution" value="4.80 A"/>
    <property type="chains" value="Q=1-735"/>
</dbReference>
<dbReference type="PDB" id="6GYM">
    <property type="method" value="EM"/>
    <property type="resolution" value="6.70 A"/>
    <property type="chains" value="Q=1-735"/>
</dbReference>
<dbReference type="PDB" id="7MEI">
    <property type="method" value="EM"/>
    <property type="resolution" value="3.54 A"/>
    <property type="chains" value="Q=1-735"/>
</dbReference>
<dbReference type="PDB" id="7MK9">
    <property type="method" value="EM"/>
    <property type="resolution" value="3.54 A"/>
    <property type="chains" value="Q=1-735"/>
</dbReference>
<dbReference type="PDB" id="7ML0">
    <property type="method" value="EM"/>
    <property type="resolution" value="3.00 A"/>
    <property type="chains" value="Q=1-735"/>
</dbReference>
<dbReference type="PDB" id="7ML1">
    <property type="method" value="EM"/>
    <property type="resolution" value="4.00 A"/>
    <property type="chains" value="Q=1-735"/>
</dbReference>
<dbReference type="PDB" id="7ML2">
    <property type="method" value="EM"/>
    <property type="resolution" value="3.40 A"/>
    <property type="chains" value="Q=1-735"/>
</dbReference>
<dbReference type="PDB" id="7ML4">
    <property type="method" value="EM"/>
    <property type="resolution" value="3.10 A"/>
    <property type="chains" value="Q=1-735"/>
</dbReference>
<dbReference type="PDB" id="7O4I">
    <property type="method" value="EM"/>
    <property type="resolution" value="3.20 A"/>
    <property type="chains" value="Q=1-735"/>
</dbReference>
<dbReference type="PDB" id="7O4J">
    <property type="method" value="EM"/>
    <property type="resolution" value="2.90 A"/>
    <property type="chains" value="Q=1-735"/>
</dbReference>
<dbReference type="PDB" id="7O72">
    <property type="method" value="EM"/>
    <property type="resolution" value="3.40 A"/>
    <property type="chains" value="Q=1-735"/>
</dbReference>
<dbReference type="PDB" id="7O73">
    <property type="method" value="EM"/>
    <property type="resolution" value="3.40 A"/>
    <property type="chains" value="Q=1-735"/>
</dbReference>
<dbReference type="PDB" id="7O75">
    <property type="method" value="EM"/>
    <property type="resolution" value="3.20 A"/>
    <property type="chains" value="Q=1-735"/>
</dbReference>
<dbReference type="PDB" id="7UI9">
    <property type="method" value="EM"/>
    <property type="resolution" value="3.30 A"/>
    <property type="chains" value="P=1-735"/>
</dbReference>
<dbReference type="PDB" id="7UIF">
    <property type="method" value="EM"/>
    <property type="resolution" value="4.60 A"/>
    <property type="chains" value="P=1-735"/>
</dbReference>
<dbReference type="PDB" id="7UIO">
    <property type="method" value="EM"/>
    <property type="resolution" value="3.30 A"/>
    <property type="chains" value="AP/BP=1-735"/>
</dbReference>
<dbReference type="PDB" id="7ZS9">
    <property type="method" value="EM"/>
    <property type="resolution" value="3.10 A"/>
    <property type="chains" value="Q=1-735"/>
</dbReference>
<dbReference type="PDB" id="7ZSA">
    <property type="method" value="EM"/>
    <property type="resolution" value="4.00 A"/>
    <property type="chains" value="Q=1-735"/>
</dbReference>
<dbReference type="PDB" id="7ZSB">
    <property type="method" value="EM"/>
    <property type="resolution" value="6.60 A"/>
    <property type="chains" value="Q=1-735"/>
</dbReference>
<dbReference type="PDB" id="8CEN">
    <property type="method" value="EM"/>
    <property type="resolution" value="3.00 A"/>
    <property type="chains" value="Q=1-735"/>
</dbReference>
<dbReference type="PDB" id="8CEO">
    <property type="method" value="EM"/>
    <property type="resolution" value="3.60 A"/>
    <property type="chains" value="Q=1-735"/>
</dbReference>
<dbReference type="PDB" id="8UMH">
    <property type="method" value="EM"/>
    <property type="resolution" value="4.10 A"/>
    <property type="chains" value="Q=1-735"/>
</dbReference>
<dbReference type="PDB" id="8UMI">
    <property type="method" value="EM"/>
    <property type="resolution" value="3.70 A"/>
    <property type="chains" value="Q=1-735"/>
</dbReference>
<dbReference type="PDB" id="8UOQ">
    <property type="method" value="EM"/>
    <property type="resolution" value="3.80 A"/>
    <property type="chains" value="Q=1-735"/>
</dbReference>
<dbReference type="PDB" id="8UOT">
    <property type="method" value="EM"/>
    <property type="resolution" value="3.70 A"/>
    <property type="chains" value="Q=1-735"/>
</dbReference>
<dbReference type="PDBsum" id="5FMF"/>
<dbReference type="PDBsum" id="5FYW"/>
<dbReference type="PDBsum" id="5FZ5"/>
<dbReference type="PDBsum" id="5IP7"/>
<dbReference type="PDBsum" id="5IP9"/>
<dbReference type="PDBsum" id="5OQJ"/>
<dbReference type="PDBsum" id="5OQM"/>
<dbReference type="PDBsum" id="5SVA"/>
<dbReference type="PDBsum" id="6GYK"/>
<dbReference type="PDBsum" id="6GYL"/>
<dbReference type="PDBsum" id="6GYM"/>
<dbReference type="PDBsum" id="7MEI"/>
<dbReference type="PDBsum" id="7MK9"/>
<dbReference type="PDBsum" id="7ML0"/>
<dbReference type="PDBsum" id="7ML1"/>
<dbReference type="PDBsum" id="7ML2"/>
<dbReference type="PDBsum" id="7ML4"/>
<dbReference type="PDBsum" id="7O4I"/>
<dbReference type="PDBsum" id="7O4J"/>
<dbReference type="PDBsum" id="7O72"/>
<dbReference type="PDBsum" id="7O73"/>
<dbReference type="PDBsum" id="7O75"/>
<dbReference type="PDBsum" id="7UI9"/>
<dbReference type="PDBsum" id="7UIF"/>
<dbReference type="PDBsum" id="7UIO"/>
<dbReference type="PDBsum" id="7ZS9"/>
<dbReference type="PDBsum" id="7ZSA"/>
<dbReference type="PDBsum" id="7ZSB"/>
<dbReference type="PDBsum" id="8CEN"/>
<dbReference type="PDBsum" id="8CEO"/>
<dbReference type="PDBsum" id="8UMH"/>
<dbReference type="PDBsum" id="8UMI"/>
<dbReference type="PDBsum" id="8UOQ"/>
<dbReference type="PDBsum" id="8UOT"/>
<dbReference type="BMRB" id="P41895"/>
<dbReference type="EMDB" id="EMD-0090"/>
<dbReference type="EMDB" id="EMD-0091"/>
<dbReference type="EMDB" id="EMD-0092"/>
<dbReference type="EMDB" id="EMD-12719"/>
<dbReference type="EMDB" id="EMD-12720"/>
<dbReference type="EMDB" id="EMD-12743"/>
<dbReference type="EMDB" id="EMD-12744"/>
<dbReference type="EMDB" id="EMD-12745"/>
<dbReference type="EMDB" id="EMD-14927"/>
<dbReference type="EMDB" id="EMD-14928"/>
<dbReference type="EMDB" id="EMD-14929"/>
<dbReference type="EMDB" id="EMD-23789"/>
<dbReference type="EMDB" id="EMD-23887"/>
<dbReference type="EMDB" id="EMD-23904"/>
<dbReference type="EMDB" id="EMD-23905"/>
<dbReference type="EMDB" id="EMD-23906"/>
<dbReference type="EMDB" id="EMD-23908"/>
<dbReference type="EMDB" id="EMD-26542"/>
<dbReference type="EMDB" id="EMD-26544"/>
<dbReference type="EMDB" id="EMD-26551"/>
<dbReference type="EMDB" id="EMD-3378"/>
<dbReference type="EMDB" id="EMD-3383"/>
<dbReference type="EMDB" id="EMD-3846"/>
<dbReference type="EMDB" id="EMD-42379"/>
<dbReference type="EMDB" id="EMD-42380"/>
<dbReference type="EMDB" id="EMD-42437"/>
<dbReference type="EMDB" id="EMD-42438"/>
<dbReference type="EMDB" id="EMD-8305"/>
<dbReference type="SMR" id="P41895"/>
<dbReference type="BioGRID" id="33438">
    <property type="interactions" value="171"/>
</dbReference>
<dbReference type="ComplexPortal" id="CPX-1149">
    <property type="entry name" value="General transcription factor TFIIF complex"/>
</dbReference>
<dbReference type="DIP" id="DIP-1151N"/>
<dbReference type="FunCoup" id="P41895">
    <property type="interactions" value="211"/>
</dbReference>
<dbReference type="IntAct" id="P41895">
    <property type="interactions" value="28"/>
</dbReference>
<dbReference type="MINT" id="P41895"/>
<dbReference type="STRING" id="4932.YGR186W"/>
<dbReference type="GlyGen" id="P41895">
    <property type="glycosylation" value="1 site"/>
</dbReference>
<dbReference type="iPTMnet" id="P41895"/>
<dbReference type="PaxDb" id="4932-YGR186W"/>
<dbReference type="PeptideAtlas" id="P41895"/>
<dbReference type="EnsemblFungi" id="YGR186W_mRNA">
    <property type="protein sequence ID" value="YGR186W"/>
    <property type="gene ID" value="YGR186W"/>
</dbReference>
<dbReference type="GeneID" id="853098"/>
<dbReference type="KEGG" id="sce:YGR186W"/>
<dbReference type="AGR" id="SGD:S000003418"/>
<dbReference type="SGD" id="S000003418">
    <property type="gene designation" value="TFG1"/>
</dbReference>
<dbReference type="VEuPathDB" id="FungiDB:YGR186W"/>
<dbReference type="eggNOG" id="KOG2393">
    <property type="taxonomic scope" value="Eukaryota"/>
</dbReference>
<dbReference type="GeneTree" id="ENSGT00440000038032"/>
<dbReference type="HOGENOM" id="CLU_020322_0_0_1"/>
<dbReference type="InParanoid" id="P41895"/>
<dbReference type="OMA" id="FEEFYPW"/>
<dbReference type="OrthoDB" id="76676at2759"/>
<dbReference type="BioCyc" id="YEAST:G3O-30876-MONOMER"/>
<dbReference type="Reactome" id="R-SCE-113418">
    <property type="pathway name" value="Formation of the Early Elongation Complex"/>
</dbReference>
<dbReference type="Reactome" id="R-SCE-674695">
    <property type="pathway name" value="RNA Polymerase II Pre-transcription Events"/>
</dbReference>
<dbReference type="Reactome" id="R-SCE-6796648">
    <property type="pathway name" value="TP53 Regulates Transcription of DNA Repair Genes"/>
</dbReference>
<dbReference type="Reactome" id="R-SCE-6807505">
    <property type="pathway name" value="RNA polymerase II transcribes snRNA genes"/>
</dbReference>
<dbReference type="Reactome" id="R-SCE-72086">
    <property type="pathway name" value="mRNA Capping"/>
</dbReference>
<dbReference type="Reactome" id="R-SCE-72203">
    <property type="pathway name" value="Processing of Capped Intron-Containing Pre-mRNA"/>
</dbReference>
<dbReference type="Reactome" id="R-SCE-73776">
    <property type="pathway name" value="RNA Polymerase II Promoter Escape"/>
</dbReference>
<dbReference type="Reactome" id="R-SCE-73779">
    <property type="pathway name" value="RNA Polymerase II Transcription Pre-Initiation And Promoter Opening"/>
</dbReference>
<dbReference type="Reactome" id="R-SCE-75953">
    <property type="pathway name" value="RNA Polymerase II Transcription Initiation"/>
</dbReference>
<dbReference type="Reactome" id="R-SCE-76042">
    <property type="pathway name" value="RNA Polymerase II Transcription Initiation And Promoter Clearance"/>
</dbReference>
<dbReference type="Reactome" id="R-SCE-77075">
    <property type="pathway name" value="RNA Pol II CTD phosphorylation and interaction with CE"/>
</dbReference>
<dbReference type="Reactome" id="R-SCE-9018519">
    <property type="pathway name" value="Estrogen-dependent gene expression"/>
</dbReference>
<dbReference type="BioGRID-ORCS" id="853098">
    <property type="hits" value="8 hits in 10 CRISPR screens"/>
</dbReference>
<dbReference type="EvolutionaryTrace" id="P41895"/>
<dbReference type="PRO" id="PR:P41895"/>
<dbReference type="Proteomes" id="UP000002311">
    <property type="component" value="Chromosome VII"/>
</dbReference>
<dbReference type="RNAct" id="P41895">
    <property type="molecule type" value="protein"/>
</dbReference>
<dbReference type="GO" id="GO:0005634">
    <property type="term" value="C:nucleus"/>
    <property type="evidence" value="ECO:0000314"/>
    <property type="project" value="ComplexPortal"/>
</dbReference>
<dbReference type="GO" id="GO:0005674">
    <property type="term" value="C:transcription factor TFIIF complex"/>
    <property type="evidence" value="ECO:0000314"/>
    <property type="project" value="SGD"/>
</dbReference>
<dbReference type="GO" id="GO:0003677">
    <property type="term" value="F:DNA binding"/>
    <property type="evidence" value="ECO:0007669"/>
    <property type="project" value="UniProtKB-KW"/>
</dbReference>
<dbReference type="GO" id="GO:0072542">
    <property type="term" value="F:protein phosphatase activator activity"/>
    <property type="evidence" value="ECO:0000314"/>
    <property type="project" value="SGD"/>
</dbReference>
<dbReference type="GO" id="GO:0016251">
    <property type="term" value="F:RNA polymerase II general transcription initiation factor activity"/>
    <property type="evidence" value="ECO:0000318"/>
    <property type="project" value="GO_Central"/>
</dbReference>
<dbReference type="GO" id="GO:0001096">
    <property type="term" value="F:TFIIF-class transcription factor complex binding"/>
    <property type="evidence" value="ECO:0000318"/>
    <property type="project" value="GO_Central"/>
</dbReference>
<dbReference type="GO" id="GO:0032968">
    <property type="term" value="P:positive regulation of transcription elongation by RNA polymerase II"/>
    <property type="evidence" value="ECO:0007669"/>
    <property type="project" value="InterPro"/>
</dbReference>
<dbReference type="GO" id="GO:0006355">
    <property type="term" value="P:regulation of DNA-templated transcription"/>
    <property type="evidence" value="ECO:0000314"/>
    <property type="project" value="ComplexPortal"/>
</dbReference>
<dbReference type="GO" id="GO:0051123">
    <property type="term" value="P:RNA polymerase II preinitiation complex assembly"/>
    <property type="evidence" value="ECO:0000353"/>
    <property type="project" value="ComplexPortal"/>
</dbReference>
<dbReference type="GO" id="GO:0006368">
    <property type="term" value="P:transcription elongation by RNA polymerase II"/>
    <property type="evidence" value="ECO:0000314"/>
    <property type="project" value="SGD"/>
</dbReference>
<dbReference type="GO" id="GO:0006367">
    <property type="term" value="P:transcription initiation at RNA polymerase II promoter"/>
    <property type="evidence" value="ECO:0000314"/>
    <property type="project" value="SGD"/>
</dbReference>
<dbReference type="GO" id="GO:0001174">
    <property type="term" value="P:transcriptional start site selection at RNA polymerase II promoter"/>
    <property type="evidence" value="ECO:0000315"/>
    <property type="project" value="SGD"/>
</dbReference>
<dbReference type="InterPro" id="IPR008851">
    <property type="entry name" value="TFIIF-alpha"/>
</dbReference>
<dbReference type="InterPro" id="IPR011039">
    <property type="entry name" value="TFIIF_interaction"/>
</dbReference>
<dbReference type="PANTHER" id="PTHR13011:SF0">
    <property type="entry name" value="GENERAL TRANSCRIPTION FACTOR IIF SUBUNIT 1"/>
    <property type="match status" value="1"/>
</dbReference>
<dbReference type="PANTHER" id="PTHR13011">
    <property type="entry name" value="TFIIF-ALPHA"/>
    <property type="match status" value="1"/>
</dbReference>
<dbReference type="Pfam" id="PF05793">
    <property type="entry name" value="TFIIF_alpha"/>
    <property type="match status" value="1"/>
</dbReference>
<dbReference type="SUPFAM" id="SSF50916">
    <property type="entry name" value="Rap30/74 interaction domains"/>
    <property type="match status" value="2"/>
</dbReference>
<name>T2FA_YEAST</name>
<organism>
    <name type="scientific">Saccharomyces cerevisiae (strain ATCC 204508 / S288c)</name>
    <name type="common">Baker's yeast</name>
    <dbReference type="NCBI Taxonomy" id="559292"/>
    <lineage>
        <taxon>Eukaryota</taxon>
        <taxon>Fungi</taxon>
        <taxon>Dikarya</taxon>
        <taxon>Ascomycota</taxon>
        <taxon>Saccharomycotina</taxon>
        <taxon>Saccharomycetes</taxon>
        <taxon>Saccharomycetales</taxon>
        <taxon>Saccharomycetaceae</taxon>
        <taxon>Saccharomyces</taxon>
    </lineage>
</organism>
<comment type="function">
    <text evidence="3">TFIIF is a general transcription initiation factor that binds to RNA polymerase II. Its functions include the recruitment of RNA polymerase II to the promoter bound DNA-TBP-TFIIB complex, decreasing the affinity of RNA polymerase II for non-specific DNA, allowing for the subsequent recruitment of TFIIE and TFIIH, and facilitating RNA polymerase II elongation.</text>
</comment>
<comment type="subunit">
    <text>TFIIF is composed of three different subunits: TFG1/RAP74, TFG2/RAP30 and TAF14.</text>
</comment>
<comment type="subcellular location">
    <subcellularLocation>
        <location>Nucleus</location>
    </subcellularLocation>
</comment>
<comment type="PTM">
    <text evidence="1">Phosphorylated on Ser and other residues by TAF1 and casein kinase II-like kinases.</text>
</comment>
<comment type="miscellaneous">
    <text evidence="4">Present with 1920 molecules/cell in log phase SD medium.</text>
</comment>
<comment type="similarity">
    <text evidence="5">Belongs to the TFIIF alpha subunit family.</text>
</comment>
<protein>
    <recommendedName>
        <fullName>Transcription initiation factor IIF subunit alpha</fullName>
        <shortName>TFIIF-alpha</shortName>
    </recommendedName>
    <alternativeName>
        <fullName>TFIIF large subunit</fullName>
    </alternativeName>
    <alternativeName>
        <fullName>Transcription factor G 105 kDa subunit</fullName>
        <shortName>P105</shortName>
    </alternativeName>
</protein>
<sequence length="735" mass="82194">MSRRNPPGSRNGGGPTNASPFIKRDRMRRNFLRMRMGQNGSNSSSPGVPNGDNSRGSLVKKDDPEYAEEREKMLLQIGVEADAGRSNVKVKDEDPNEYNEFPLRAIPKEDLENMRTHLLKFQSKKKINPVTDFHLPVRLHRKDTRNLQFQLTRAEIVQRQKEISEYKKKAEQERSTPNSGGMNKSGTVSLNNTVKDGSQTPTVDSVTKDNTANGVNSSIPTVTGSSVPPASPTTVSAVESNGLSNGSTSAANGLDGNASTANLANGRPLVTKLEDAGPAEDPTKVGMVKYDGKEVTNEPEFEEGTMDPLADVAPDGGGRAKRGNLRRKTRQLKVLDENAKKLRFEEFYPWVMEDFDGYNTWVGSYEAGNSDSYVLLSVEDDGSFTMIPADKVYKFTARNKYATLTIDEAEKRMDKKSGEVPRWLMKHLDNIGTTTTRYDRTRRKLKAVADQQAMDEDDRDDNSEVELDYDEEFADDEEAPIIDGNEQENKESEQRIKKEMLQANAMGLRDEEAPSENEEDELFGEKKIDEDGERIKKALQKTELAALYSSDENEINPYLSESDIENKENESPVKKEEDSDTLSKSKRSSPKKQQKKATNAHVHKEPTLRVKSIKNCVIILKGDKKILKSFPEGEWNPQTTKAVDSSNNASNTVPSPIKQEEGLNSTVAEREETPAPTITEKDIIEAIGDGKVNIKEFGKFIRRKYPGAENKKLMFAIVKKLCRKVGNDHMELKKE</sequence>
<evidence type="ECO:0000250" key="1"/>
<evidence type="ECO:0000256" key="2">
    <source>
        <dbReference type="SAM" id="MobiDB-lite"/>
    </source>
</evidence>
<evidence type="ECO:0000269" key="3">
    <source>
    </source>
</evidence>
<evidence type="ECO:0000269" key="4">
    <source>
    </source>
</evidence>
<evidence type="ECO:0000305" key="5"/>
<evidence type="ECO:0007744" key="6">
    <source>
    </source>
</evidence>
<evidence type="ECO:0007744" key="7">
    <source>
    </source>
</evidence>
<evidence type="ECO:0007744" key="8">
    <source>
    </source>
</evidence>
<evidence type="ECO:0007744" key="9">
    <source>
    </source>
</evidence>
<evidence type="ECO:0007829" key="10">
    <source>
        <dbReference type="PDB" id="7ML0"/>
    </source>
</evidence>
<evidence type="ECO:0007829" key="11">
    <source>
        <dbReference type="PDB" id="7O4J"/>
    </source>
</evidence>
<reference key="1">
    <citation type="journal article" date="1994" name="Genes Dev.">
        <title>TFIIF-TAF-RNA polymerase II connection.</title>
        <authorList>
            <person name="Henry N.L."/>
            <person name="Campbell A.M."/>
            <person name="Feaver W.J."/>
            <person name="Poon D."/>
            <person name="Weil P.A."/>
            <person name="Kornberg R.D."/>
        </authorList>
    </citation>
    <scope>NUCLEOTIDE SEQUENCE [GENOMIC DNA]</scope>
    <scope>PROTEIN SEQUENCE OF 125-142 AND 143-161</scope>
    <source>
        <strain>ATCC 208279 / BJ926</strain>
    </source>
</reference>
<reference key="2">
    <citation type="journal article" date="1995" name="Proc. Natl. Acad. Sci. U.S.A.">
        <title>Identification of the gene (SSU71/TFG1) encoding the largest subunit of transcription factor TFIIF as a suppressor of a TFIIB mutation in Saccharomyces cerevisiae.</title>
        <authorList>
            <person name="Sun Z.W."/>
            <person name="Hampsey M."/>
        </authorList>
    </citation>
    <scope>NUCLEOTIDE SEQUENCE [GENOMIC DNA]</scope>
</reference>
<reference key="3">
    <citation type="journal article" date="1997" name="Yeast">
        <title>DNA sequence analysis of a 23,002 bp DNA fragment of the right arm of Saccharomyces cerevisiae chromosome VII.</title>
        <authorList>
            <person name="Arroyo J."/>
            <person name="Garcia-Gonzalez M."/>
            <person name="Garcia-Saez M.I."/>
            <person name="Sanchez-Perez M."/>
            <person name="Nombela C."/>
        </authorList>
    </citation>
    <scope>NUCLEOTIDE SEQUENCE [GENOMIC DNA]</scope>
    <source>
        <strain>ATCC 204508 / S288c</strain>
    </source>
</reference>
<reference key="4">
    <citation type="journal article" date="1997" name="Nature">
        <title>The nucleotide sequence of Saccharomyces cerevisiae chromosome VII.</title>
        <authorList>
            <person name="Tettelin H."/>
            <person name="Agostoni-Carbone M.L."/>
            <person name="Albermann K."/>
            <person name="Albers M."/>
            <person name="Arroyo J."/>
            <person name="Backes U."/>
            <person name="Barreiros T."/>
            <person name="Bertani I."/>
            <person name="Bjourson A.J."/>
            <person name="Brueckner M."/>
            <person name="Bruschi C.V."/>
            <person name="Carignani G."/>
            <person name="Castagnoli L."/>
            <person name="Cerdan E."/>
            <person name="Clemente M.L."/>
            <person name="Coblenz A."/>
            <person name="Coglievina M."/>
            <person name="Coissac E."/>
            <person name="Defoor E."/>
            <person name="Del Bino S."/>
            <person name="Delius H."/>
            <person name="Delneri D."/>
            <person name="de Wergifosse P."/>
            <person name="Dujon B."/>
            <person name="Durand P."/>
            <person name="Entian K.-D."/>
            <person name="Eraso P."/>
            <person name="Escribano V."/>
            <person name="Fabiani L."/>
            <person name="Fartmann B."/>
            <person name="Feroli F."/>
            <person name="Feuermann M."/>
            <person name="Frontali L."/>
            <person name="Garcia-Gonzalez M."/>
            <person name="Garcia-Saez M.I."/>
            <person name="Goffeau A."/>
            <person name="Guerreiro P."/>
            <person name="Hani J."/>
            <person name="Hansen M."/>
            <person name="Hebling U."/>
            <person name="Hernandez K."/>
            <person name="Heumann K."/>
            <person name="Hilger F."/>
            <person name="Hofmann B."/>
            <person name="Indge K.J."/>
            <person name="James C.M."/>
            <person name="Klima R."/>
            <person name="Koetter P."/>
            <person name="Kramer B."/>
            <person name="Kramer W."/>
            <person name="Lauquin G."/>
            <person name="Leuther H."/>
            <person name="Louis E.J."/>
            <person name="Maillier E."/>
            <person name="Marconi A."/>
            <person name="Martegani E."/>
            <person name="Mazon M.J."/>
            <person name="Mazzoni C."/>
            <person name="McReynolds A.D.K."/>
            <person name="Melchioretto P."/>
            <person name="Mewes H.-W."/>
            <person name="Minenkova O."/>
            <person name="Mueller-Auer S."/>
            <person name="Nawrocki A."/>
            <person name="Netter P."/>
            <person name="Neu R."/>
            <person name="Nombela C."/>
            <person name="Oliver S.G."/>
            <person name="Panzeri L."/>
            <person name="Paoluzi S."/>
            <person name="Plevani P."/>
            <person name="Portetelle D."/>
            <person name="Portillo F."/>
            <person name="Potier S."/>
            <person name="Purnelle B."/>
            <person name="Rieger M."/>
            <person name="Riles L."/>
            <person name="Rinaldi T."/>
            <person name="Robben J."/>
            <person name="Rodrigues-Pousada C."/>
            <person name="Rodriguez-Belmonte E."/>
            <person name="Rodriguez-Torres A.M."/>
            <person name="Rose M."/>
            <person name="Ruzzi M."/>
            <person name="Saliola M."/>
            <person name="Sanchez-Perez M."/>
            <person name="Schaefer B."/>
            <person name="Schaefer M."/>
            <person name="Scharfe M."/>
            <person name="Schmidheini T."/>
            <person name="Schreer A."/>
            <person name="Skala J."/>
            <person name="Souciet J.-L."/>
            <person name="Steensma H.Y."/>
            <person name="Talla E."/>
            <person name="Thierry A."/>
            <person name="Vandenbol M."/>
            <person name="van der Aart Q.J.M."/>
            <person name="Van Dyck L."/>
            <person name="Vanoni M."/>
            <person name="Verhasselt P."/>
            <person name="Voet M."/>
            <person name="Volckaert G."/>
            <person name="Wambutt R."/>
            <person name="Watson M.D."/>
            <person name="Weber N."/>
            <person name="Wedler E."/>
            <person name="Wedler H."/>
            <person name="Wipfli P."/>
            <person name="Wolf K."/>
            <person name="Wright L.F."/>
            <person name="Zaccaria P."/>
            <person name="Zimmermann M."/>
            <person name="Zollner A."/>
            <person name="Kleine K."/>
        </authorList>
    </citation>
    <scope>NUCLEOTIDE SEQUENCE [LARGE SCALE GENOMIC DNA]</scope>
    <source>
        <strain>ATCC 204508 / S288c</strain>
    </source>
</reference>
<reference key="5">
    <citation type="journal article" date="2014" name="G3 (Bethesda)">
        <title>The reference genome sequence of Saccharomyces cerevisiae: Then and now.</title>
        <authorList>
            <person name="Engel S.R."/>
            <person name="Dietrich F.S."/>
            <person name="Fisk D.G."/>
            <person name="Binkley G."/>
            <person name="Balakrishnan R."/>
            <person name="Costanzo M.C."/>
            <person name="Dwight S.S."/>
            <person name="Hitz B.C."/>
            <person name="Karra K."/>
            <person name="Nash R.S."/>
            <person name="Weng S."/>
            <person name="Wong E.D."/>
            <person name="Lloyd P."/>
            <person name="Skrzypek M.S."/>
            <person name="Miyasato S.R."/>
            <person name="Simison M."/>
            <person name="Cherry J.M."/>
        </authorList>
    </citation>
    <scope>GENOME REANNOTATION</scope>
    <source>
        <strain>ATCC 204508 / S288c</strain>
    </source>
</reference>
<reference key="6">
    <citation type="journal article" date="1992" name="J. Biol. Chem.">
        <title>Purification and characterization of yeast RNA polymerase II general initiation factor g.</title>
        <authorList>
            <person name="Henry N.L."/>
            <person name="Sayre M.H."/>
            <person name="Kornberg R.D."/>
        </authorList>
    </citation>
    <scope>FUNCTION</scope>
</reference>
<reference key="7">
    <citation type="journal article" date="2003" name="Nature">
        <title>Global analysis of protein expression in yeast.</title>
        <authorList>
            <person name="Ghaemmaghami S."/>
            <person name="Huh W.-K."/>
            <person name="Bower K."/>
            <person name="Howson R.W."/>
            <person name="Belle A."/>
            <person name="Dephoure N."/>
            <person name="O'Shea E.K."/>
            <person name="Weissman J.S."/>
        </authorList>
    </citation>
    <scope>LEVEL OF PROTEIN EXPRESSION [LARGE SCALE ANALYSIS]</scope>
</reference>
<reference key="8">
    <citation type="journal article" date="2007" name="J. Proteome Res.">
        <title>Large-scale phosphorylation analysis of alpha-factor-arrested Saccharomyces cerevisiae.</title>
        <authorList>
            <person name="Li X."/>
            <person name="Gerber S.A."/>
            <person name="Rudner A.D."/>
            <person name="Beausoleil S.A."/>
            <person name="Haas W."/>
            <person name="Villen J."/>
            <person name="Elias J.E."/>
            <person name="Gygi S.P."/>
        </authorList>
    </citation>
    <scope>PHOSPHORYLATION [LARGE SCALE ANALYSIS] AT THR-200; SER-515 AND SER-655</scope>
    <scope>IDENTIFICATION BY MASS SPECTROMETRY [LARGE SCALE ANALYSIS]</scope>
    <source>
        <strain>ADR376</strain>
    </source>
</reference>
<reference key="9">
    <citation type="journal article" date="2007" name="Proc. Natl. Acad. Sci. U.S.A.">
        <title>Analysis of phosphorylation sites on proteins from Saccharomyces cerevisiae by electron transfer dissociation (ETD) mass spectrometry.</title>
        <authorList>
            <person name="Chi A."/>
            <person name="Huttenhower C."/>
            <person name="Geer L.Y."/>
            <person name="Coon J.J."/>
            <person name="Syka J.E.P."/>
            <person name="Bai D.L."/>
            <person name="Shabanowitz J."/>
            <person name="Burke D.J."/>
            <person name="Troyanskaya O.G."/>
            <person name="Hunt D.F."/>
        </authorList>
    </citation>
    <scope>PHOSPHORYLATION [LARGE SCALE ANALYSIS] AT SER-571</scope>
    <scope>IDENTIFICATION BY MASS SPECTROMETRY [LARGE SCALE ANALYSIS]</scope>
</reference>
<reference key="10">
    <citation type="journal article" date="2008" name="Mol. Cell. Proteomics">
        <title>A multidimensional chromatography technology for in-depth phosphoproteome analysis.</title>
        <authorList>
            <person name="Albuquerque C.P."/>
            <person name="Smolka M.B."/>
            <person name="Payne S.H."/>
            <person name="Bafna V."/>
            <person name="Eng J."/>
            <person name="Zhou H."/>
        </authorList>
    </citation>
    <scope>PHOSPHORYLATION [LARGE SCALE ANALYSIS] AT SER-198; SER-515 AND SER-655</scope>
    <scope>IDENTIFICATION BY MASS SPECTROMETRY [LARGE SCALE ANALYSIS]</scope>
</reference>
<reference key="11">
    <citation type="journal article" date="2009" name="Science">
        <title>Global analysis of Cdk1 substrate phosphorylation sites provides insights into evolution.</title>
        <authorList>
            <person name="Holt L.J."/>
            <person name="Tuch B.B."/>
            <person name="Villen J."/>
            <person name="Johnson A.D."/>
            <person name="Gygi S.P."/>
            <person name="Morgan D.O."/>
        </authorList>
    </citation>
    <scope>PHOSPHORYLATION [LARGE SCALE ANALYSIS] AT SER-198; THR-200; SER-515; SER-560 AND SER-562</scope>
    <scope>IDENTIFICATION BY MASS SPECTROMETRY [LARGE SCALE ANALYSIS]</scope>
</reference>
<accession>P41895</accession>
<accession>D6VUW9</accession>
<gene>
    <name type="primary">TFG1</name>
    <name type="synonym">SSU71</name>
    <name type="ordered locus">YGR186W</name>
    <name type="ORF">G7526</name>
</gene>
<keyword id="KW-0002">3D-structure</keyword>
<keyword id="KW-0903">Direct protein sequencing</keyword>
<keyword id="KW-0238">DNA-binding</keyword>
<keyword id="KW-0539">Nucleus</keyword>
<keyword id="KW-0597">Phosphoprotein</keyword>
<keyword id="KW-1185">Reference proteome</keyword>
<keyword id="KW-0804">Transcription</keyword>
<keyword id="KW-0805">Transcription regulation</keyword>
<feature type="chain" id="PRO_0000211234" description="Transcription initiation factor IIF subunit alpha">
    <location>
        <begin position="1"/>
        <end position="735"/>
    </location>
</feature>
<feature type="region of interest" description="Disordered" evidence="2">
    <location>
        <begin position="1"/>
        <end position="68"/>
    </location>
</feature>
<feature type="region of interest" description="Disordered" evidence="2">
    <location>
        <begin position="165"/>
        <end position="263"/>
    </location>
</feature>
<feature type="region of interest" description="Disordered" evidence="2">
    <location>
        <begin position="297"/>
        <end position="323"/>
    </location>
</feature>
<feature type="region of interest" description="Disordered" evidence="2">
    <location>
        <begin position="446"/>
        <end position="465"/>
    </location>
</feature>
<feature type="region of interest" description="Disordered" evidence="2">
    <location>
        <begin position="471"/>
        <end position="606"/>
    </location>
</feature>
<feature type="region of interest" description="Disordered" evidence="2">
    <location>
        <begin position="631"/>
        <end position="674"/>
    </location>
</feature>
<feature type="compositionally biased region" description="Low complexity" evidence="2">
    <location>
        <begin position="33"/>
        <end position="54"/>
    </location>
</feature>
<feature type="compositionally biased region" description="Basic and acidic residues" evidence="2">
    <location>
        <begin position="59"/>
        <end position="68"/>
    </location>
</feature>
<feature type="compositionally biased region" description="Basic and acidic residues" evidence="2">
    <location>
        <begin position="165"/>
        <end position="174"/>
    </location>
</feature>
<feature type="compositionally biased region" description="Polar residues" evidence="2">
    <location>
        <begin position="175"/>
        <end position="219"/>
    </location>
</feature>
<feature type="compositionally biased region" description="Low complexity" evidence="2">
    <location>
        <begin position="220"/>
        <end position="238"/>
    </location>
</feature>
<feature type="compositionally biased region" description="Polar residues" evidence="2">
    <location>
        <begin position="239"/>
        <end position="263"/>
    </location>
</feature>
<feature type="compositionally biased region" description="Acidic residues" evidence="2">
    <location>
        <begin position="453"/>
        <end position="465"/>
    </location>
</feature>
<feature type="compositionally biased region" description="Acidic residues" evidence="2">
    <location>
        <begin position="471"/>
        <end position="480"/>
    </location>
</feature>
<feature type="compositionally biased region" description="Basic and acidic residues" evidence="2">
    <location>
        <begin position="487"/>
        <end position="500"/>
    </location>
</feature>
<feature type="compositionally biased region" description="Acidic residues" evidence="2">
    <location>
        <begin position="513"/>
        <end position="522"/>
    </location>
</feature>
<feature type="compositionally biased region" description="Basic and acidic residues" evidence="2">
    <location>
        <begin position="523"/>
        <end position="536"/>
    </location>
</feature>
<feature type="compositionally biased region" description="Basic and acidic residues" evidence="2">
    <location>
        <begin position="564"/>
        <end position="583"/>
    </location>
</feature>
<feature type="compositionally biased region" description="Basic residues" evidence="2">
    <location>
        <begin position="584"/>
        <end position="595"/>
    </location>
</feature>
<feature type="compositionally biased region" description="Polar residues" evidence="2">
    <location>
        <begin position="636"/>
        <end position="654"/>
    </location>
</feature>
<feature type="modified residue" description="Phosphoserine" evidence="8 9">
    <location>
        <position position="198"/>
    </location>
</feature>
<feature type="modified residue" description="Phosphothreonine" evidence="7 9">
    <location>
        <position position="200"/>
    </location>
</feature>
<feature type="modified residue" description="Phosphoserine" evidence="7 8 9">
    <location>
        <position position="515"/>
    </location>
</feature>
<feature type="modified residue" description="Phosphoserine" evidence="9">
    <location>
        <position position="560"/>
    </location>
</feature>
<feature type="modified residue" description="Phosphoserine" evidence="9">
    <location>
        <position position="562"/>
    </location>
</feature>
<feature type="modified residue" description="Phosphoserine" evidence="6">
    <location>
        <position position="571"/>
    </location>
</feature>
<feature type="modified residue" description="Phosphoserine" evidence="7 8">
    <location>
        <position position="655"/>
    </location>
</feature>
<feature type="sequence conflict" description="In Ref. 1; AAA61640." evidence="5" ref="1">
    <original>V</original>
    <variation>I</variation>
    <location>
        <position position="238"/>
    </location>
</feature>
<feature type="helix" evidence="11">
    <location>
        <begin position="27"/>
        <end position="34"/>
    </location>
</feature>
<feature type="strand" evidence="11">
    <location>
        <begin position="98"/>
        <end position="105"/>
    </location>
</feature>
<feature type="helix" evidence="11">
    <location>
        <begin position="108"/>
        <end position="110"/>
    </location>
</feature>
<feature type="turn" evidence="11">
    <location>
        <begin position="111"/>
        <end position="113"/>
    </location>
</feature>
<feature type="strand" evidence="11">
    <location>
        <begin position="115"/>
        <end position="121"/>
    </location>
</feature>
<feature type="strand" evidence="11">
    <location>
        <begin position="123"/>
        <end position="125"/>
    </location>
</feature>
<feature type="turn" evidence="11">
    <location>
        <begin position="129"/>
        <end position="131"/>
    </location>
</feature>
<feature type="strand" evidence="11">
    <location>
        <begin position="138"/>
        <end position="142"/>
    </location>
</feature>
<feature type="turn" evidence="11">
    <location>
        <begin position="145"/>
        <end position="148"/>
    </location>
</feature>
<feature type="helix" evidence="11">
    <location>
        <begin position="153"/>
        <end position="167"/>
    </location>
</feature>
<feature type="strand" evidence="11">
    <location>
        <begin position="330"/>
        <end position="332"/>
    </location>
</feature>
<feature type="helix" evidence="11">
    <location>
        <begin position="337"/>
        <end position="345"/>
    </location>
</feature>
<feature type="strand" evidence="11">
    <location>
        <begin position="350"/>
        <end position="353"/>
    </location>
</feature>
<feature type="strand" evidence="11">
    <location>
        <begin position="355"/>
        <end position="358"/>
    </location>
</feature>
<feature type="strand" evidence="11">
    <location>
        <begin position="360"/>
        <end position="366"/>
    </location>
</feature>
<feature type="strand" evidence="11">
    <location>
        <begin position="370"/>
        <end position="378"/>
    </location>
</feature>
<feature type="strand" evidence="10">
    <location>
        <begin position="380"/>
        <end position="382"/>
    </location>
</feature>
<feature type="strand" evidence="11">
    <location>
        <begin position="384"/>
        <end position="388"/>
    </location>
</feature>
<feature type="strand" evidence="11">
    <location>
        <begin position="391"/>
        <end position="397"/>
    </location>
</feature>
<feature type="strand" evidence="11">
    <location>
        <begin position="399"/>
        <end position="401"/>
    </location>
</feature>
<feature type="helix" evidence="11">
    <location>
        <begin position="406"/>
        <end position="413"/>
    </location>
</feature>
<feature type="strand" evidence="11">
    <location>
        <begin position="417"/>
        <end position="419"/>
    </location>
</feature>
<feature type="helix" evidence="11">
    <location>
        <begin position="424"/>
        <end position="431"/>
    </location>
</feature>
<feature type="helix" evidence="11">
    <location>
        <begin position="437"/>
        <end position="449"/>
    </location>
</feature>